<proteinExistence type="inferred from homology"/>
<protein>
    <recommendedName>
        <fullName evidence="1">tRNA (guanine-N(1)-)-methyltransferase</fullName>
        <ecNumber evidence="1">2.1.1.228</ecNumber>
    </recommendedName>
    <alternativeName>
        <fullName evidence="1">M1G-methyltransferase</fullName>
    </alternativeName>
    <alternativeName>
        <fullName evidence="1">tRNA [GM37] methyltransferase</fullName>
    </alternativeName>
</protein>
<comment type="function">
    <text evidence="1">Specifically methylates guanosine-37 in various tRNAs.</text>
</comment>
<comment type="catalytic activity">
    <reaction evidence="1">
        <text>guanosine(37) in tRNA + S-adenosyl-L-methionine = N(1)-methylguanosine(37) in tRNA + S-adenosyl-L-homocysteine + H(+)</text>
        <dbReference type="Rhea" id="RHEA:36899"/>
        <dbReference type="Rhea" id="RHEA-COMP:10145"/>
        <dbReference type="Rhea" id="RHEA-COMP:10147"/>
        <dbReference type="ChEBI" id="CHEBI:15378"/>
        <dbReference type="ChEBI" id="CHEBI:57856"/>
        <dbReference type="ChEBI" id="CHEBI:59789"/>
        <dbReference type="ChEBI" id="CHEBI:73542"/>
        <dbReference type="ChEBI" id="CHEBI:74269"/>
        <dbReference type="EC" id="2.1.1.228"/>
    </reaction>
</comment>
<comment type="subunit">
    <text evidence="1">Homodimer.</text>
</comment>
<comment type="subcellular location">
    <subcellularLocation>
        <location evidence="1">Cytoplasm</location>
    </subcellularLocation>
</comment>
<comment type="similarity">
    <text evidence="1">Belongs to the RNA methyltransferase TrmD family.</text>
</comment>
<name>TRMD_PELUB</name>
<organism>
    <name type="scientific">Pelagibacter ubique (strain HTCC1062)</name>
    <dbReference type="NCBI Taxonomy" id="335992"/>
    <lineage>
        <taxon>Bacteria</taxon>
        <taxon>Pseudomonadati</taxon>
        <taxon>Pseudomonadota</taxon>
        <taxon>Alphaproteobacteria</taxon>
        <taxon>Candidatus Pelagibacterales</taxon>
        <taxon>Candidatus Pelagibacteraceae</taxon>
        <taxon>Candidatus Pelagibacter</taxon>
    </lineage>
</organism>
<reference key="1">
    <citation type="journal article" date="2005" name="Science">
        <title>Genome streamlining in a cosmopolitan oceanic bacterium.</title>
        <authorList>
            <person name="Giovannoni S.J."/>
            <person name="Tripp H.J."/>
            <person name="Givan S."/>
            <person name="Podar M."/>
            <person name="Vergin K.L."/>
            <person name="Baptista D."/>
            <person name="Bibbs L."/>
            <person name="Eads J."/>
            <person name="Richardson T.H."/>
            <person name="Noordewier M."/>
            <person name="Rappe M.S."/>
            <person name="Short J.M."/>
            <person name="Carrington J.C."/>
            <person name="Mathur E.J."/>
        </authorList>
    </citation>
    <scope>NUCLEOTIDE SEQUENCE [LARGE SCALE GENOMIC DNA]</scope>
    <source>
        <strain>HTCC1062</strain>
    </source>
</reference>
<sequence>MWQAQIFTLYPDFFPGPLNKGLYGKALTNKIWDLKVVNFREAAEDKHKTVDDTPFGGGSGMLLKADILAKSLDENKKEGERIFYLSPKGKKLDQKLALELSKEKSISLICGHFEGVDERLLSTRNIEELSIGDFILSGGETAAFVVLDSVLRLLPGVLGNEQSKNDESFENGLLEYPQYTKPQIWEEKSVPEVLLSGDHNKIKDWRLSQSEAITRVRRPDLWEKYKKN</sequence>
<gene>
    <name evidence="1" type="primary">trmD</name>
    <name type="ordered locus">SAR11_0254</name>
</gene>
<accession>Q4FP13</accession>
<keyword id="KW-0963">Cytoplasm</keyword>
<keyword id="KW-0489">Methyltransferase</keyword>
<keyword id="KW-1185">Reference proteome</keyword>
<keyword id="KW-0949">S-adenosyl-L-methionine</keyword>
<keyword id="KW-0808">Transferase</keyword>
<keyword id="KW-0819">tRNA processing</keyword>
<evidence type="ECO:0000255" key="1">
    <source>
        <dbReference type="HAMAP-Rule" id="MF_00605"/>
    </source>
</evidence>
<feature type="chain" id="PRO_0000060428" description="tRNA (guanine-N(1)-)-methyltransferase">
    <location>
        <begin position="1"/>
        <end position="228"/>
    </location>
</feature>
<feature type="binding site" evidence="1">
    <location>
        <position position="111"/>
    </location>
    <ligand>
        <name>S-adenosyl-L-methionine</name>
        <dbReference type="ChEBI" id="CHEBI:59789"/>
    </ligand>
</feature>
<feature type="binding site" evidence="1">
    <location>
        <begin position="131"/>
        <end position="136"/>
    </location>
    <ligand>
        <name>S-adenosyl-L-methionine</name>
        <dbReference type="ChEBI" id="CHEBI:59789"/>
    </ligand>
</feature>
<dbReference type="EC" id="2.1.1.228" evidence="1"/>
<dbReference type="EMBL" id="CP000084">
    <property type="protein sequence ID" value="AAZ21076.1"/>
    <property type="molecule type" value="Genomic_DNA"/>
</dbReference>
<dbReference type="RefSeq" id="WP_011281574.1">
    <property type="nucleotide sequence ID" value="NC_007205.1"/>
</dbReference>
<dbReference type="SMR" id="Q4FP13"/>
<dbReference type="STRING" id="335992.SAR11_0254"/>
<dbReference type="GeneID" id="66294752"/>
<dbReference type="KEGG" id="pub:SAR11_0254"/>
<dbReference type="eggNOG" id="COG0336">
    <property type="taxonomic scope" value="Bacteria"/>
</dbReference>
<dbReference type="HOGENOM" id="CLU_047363_0_1_5"/>
<dbReference type="OrthoDB" id="9807416at2"/>
<dbReference type="Proteomes" id="UP000002528">
    <property type="component" value="Chromosome"/>
</dbReference>
<dbReference type="GO" id="GO:0005829">
    <property type="term" value="C:cytosol"/>
    <property type="evidence" value="ECO:0007669"/>
    <property type="project" value="TreeGrafter"/>
</dbReference>
<dbReference type="GO" id="GO:0052906">
    <property type="term" value="F:tRNA (guanine(37)-N1)-methyltransferase activity"/>
    <property type="evidence" value="ECO:0007669"/>
    <property type="project" value="UniProtKB-UniRule"/>
</dbReference>
<dbReference type="GO" id="GO:0002939">
    <property type="term" value="P:tRNA N1-guanine methylation"/>
    <property type="evidence" value="ECO:0007669"/>
    <property type="project" value="TreeGrafter"/>
</dbReference>
<dbReference type="CDD" id="cd18080">
    <property type="entry name" value="TrmD-like"/>
    <property type="match status" value="1"/>
</dbReference>
<dbReference type="Gene3D" id="3.40.1280.10">
    <property type="match status" value="1"/>
</dbReference>
<dbReference type="Gene3D" id="1.10.1270.20">
    <property type="entry name" value="tRNA(m1g37)methyltransferase, domain 2"/>
    <property type="match status" value="1"/>
</dbReference>
<dbReference type="HAMAP" id="MF_00605">
    <property type="entry name" value="TrmD"/>
    <property type="match status" value="1"/>
</dbReference>
<dbReference type="InterPro" id="IPR029028">
    <property type="entry name" value="Alpha/beta_knot_MTases"/>
</dbReference>
<dbReference type="InterPro" id="IPR023148">
    <property type="entry name" value="tRNA_m1G_MeTrfase_C_sf"/>
</dbReference>
<dbReference type="InterPro" id="IPR002649">
    <property type="entry name" value="tRNA_m1G_MeTrfase_TrmD"/>
</dbReference>
<dbReference type="InterPro" id="IPR029026">
    <property type="entry name" value="tRNA_m1G_MTases_N"/>
</dbReference>
<dbReference type="InterPro" id="IPR016009">
    <property type="entry name" value="tRNA_MeTrfase_TRMD/TRM10"/>
</dbReference>
<dbReference type="NCBIfam" id="NF000648">
    <property type="entry name" value="PRK00026.1"/>
    <property type="match status" value="1"/>
</dbReference>
<dbReference type="NCBIfam" id="TIGR00088">
    <property type="entry name" value="trmD"/>
    <property type="match status" value="1"/>
</dbReference>
<dbReference type="PANTHER" id="PTHR46417">
    <property type="entry name" value="TRNA (GUANINE-N(1)-)-METHYLTRANSFERASE"/>
    <property type="match status" value="1"/>
</dbReference>
<dbReference type="PANTHER" id="PTHR46417:SF1">
    <property type="entry name" value="TRNA (GUANINE-N(1)-)-METHYLTRANSFERASE"/>
    <property type="match status" value="1"/>
</dbReference>
<dbReference type="Pfam" id="PF01746">
    <property type="entry name" value="tRNA_m1G_MT"/>
    <property type="match status" value="1"/>
</dbReference>
<dbReference type="PIRSF" id="PIRSF000386">
    <property type="entry name" value="tRNA_mtase"/>
    <property type="match status" value="1"/>
</dbReference>
<dbReference type="SUPFAM" id="SSF75217">
    <property type="entry name" value="alpha/beta knot"/>
    <property type="match status" value="1"/>
</dbReference>